<protein>
    <recommendedName>
        <fullName evidence="1">Fe/S biogenesis protein NfuA</fullName>
    </recommendedName>
</protein>
<name>NFUA_YERPY</name>
<proteinExistence type="inferred from homology"/>
<comment type="function">
    <text evidence="1">Involved in iron-sulfur cluster biogenesis. Binds a 4Fe-4S cluster, can transfer this cluster to apoproteins, and thereby intervenes in the maturation of Fe/S proteins. Could also act as a scaffold/chaperone for damaged Fe/S proteins.</text>
</comment>
<comment type="cofactor">
    <cofactor evidence="1">
        <name>[4Fe-4S] cluster</name>
        <dbReference type="ChEBI" id="CHEBI:49883"/>
    </cofactor>
    <text evidence="1">Binds 1 [4Fe-4S] cluster per subunit. The cluster is presumably bound at the interface of two monomers.</text>
</comment>
<comment type="subunit">
    <text evidence="1">Homodimer.</text>
</comment>
<comment type="similarity">
    <text evidence="1">Belongs to the NfuA family.</text>
</comment>
<keyword id="KW-0004">4Fe-4S</keyword>
<keyword id="KW-0408">Iron</keyword>
<keyword id="KW-0411">Iron-sulfur</keyword>
<keyword id="KW-0479">Metal-binding</keyword>
<organism>
    <name type="scientific">Yersinia pseudotuberculosis serotype O:3 (strain YPIII)</name>
    <dbReference type="NCBI Taxonomy" id="502800"/>
    <lineage>
        <taxon>Bacteria</taxon>
        <taxon>Pseudomonadati</taxon>
        <taxon>Pseudomonadota</taxon>
        <taxon>Gammaproteobacteria</taxon>
        <taxon>Enterobacterales</taxon>
        <taxon>Yersiniaceae</taxon>
        <taxon>Yersinia</taxon>
    </lineage>
</organism>
<accession>B1JHZ3</accession>
<reference key="1">
    <citation type="submission" date="2008-02" db="EMBL/GenBank/DDBJ databases">
        <title>Complete sequence of Yersinia pseudotuberculosis YPIII.</title>
        <authorList>
            <consortium name="US DOE Joint Genome Institute"/>
            <person name="Copeland A."/>
            <person name="Lucas S."/>
            <person name="Lapidus A."/>
            <person name="Glavina del Rio T."/>
            <person name="Dalin E."/>
            <person name="Tice H."/>
            <person name="Bruce D."/>
            <person name="Goodwin L."/>
            <person name="Pitluck S."/>
            <person name="Munk A.C."/>
            <person name="Brettin T."/>
            <person name="Detter J.C."/>
            <person name="Han C."/>
            <person name="Tapia R."/>
            <person name="Schmutz J."/>
            <person name="Larimer F."/>
            <person name="Land M."/>
            <person name="Hauser L."/>
            <person name="Challacombe J.F."/>
            <person name="Green L."/>
            <person name="Lindler L.E."/>
            <person name="Nikolich M.P."/>
            <person name="Richardson P."/>
        </authorList>
    </citation>
    <scope>NUCLEOTIDE SEQUENCE [LARGE SCALE GENOMIC DNA]</scope>
    <source>
        <strain>YPIII</strain>
    </source>
</reference>
<dbReference type="EMBL" id="CP000950">
    <property type="protein sequence ID" value="ACA66476.1"/>
    <property type="molecule type" value="Genomic_DNA"/>
</dbReference>
<dbReference type="RefSeq" id="WP_002208924.1">
    <property type="nucleotide sequence ID" value="NZ_CP009792.1"/>
</dbReference>
<dbReference type="SMR" id="B1JHZ3"/>
<dbReference type="GeneID" id="57974473"/>
<dbReference type="KEGG" id="ypy:YPK_0163"/>
<dbReference type="PATRIC" id="fig|502800.11.peg.770"/>
<dbReference type="GO" id="GO:0051539">
    <property type="term" value="F:4 iron, 4 sulfur cluster binding"/>
    <property type="evidence" value="ECO:0007669"/>
    <property type="project" value="UniProtKB-UniRule"/>
</dbReference>
<dbReference type="GO" id="GO:0005506">
    <property type="term" value="F:iron ion binding"/>
    <property type="evidence" value="ECO:0007669"/>
    <property type="project" value="InterPro"/>
</dbReference>
<dbReference type="GO" id="GO:0016226">
    <property type="term" value="P:iron-sulfur cluster assembly"/>
    <property type="evidence" value="ECO:0007669"/>
    <property type="project" value="UniProtKB-UniRule"/>
</dbReference>
<dbReference type="GO" id="GO:0051604">
    <property type="term" value="P:protein maturation"/>
    <property type="evidence" value="ECO:0007669"/>
    <property type="project" value="UniProtKB-UniRule"/>
</dbReference>
<dbReference type="Gene3D" id="3.30.300.130">
    <property type="entry name" value="Fe-S cluster assembly (FSCA)"/>
    <property type="match status" value="1"/>
</dbReference>
<dbReference type="Gene3D" id="2.60.300.12">
    <property type="entry name" value="HesB-like domain"/>
    <property type="match status" value="1"/>
</dbReference>
<dbReference type="HAMAP" id="MF_01637">
    <property type="entry name" value="Fe_S_biogen_NfuA"/>
    <property type="match status" value="1"/>
</dbReference>
<dbReference type="InterPro" id="IPR017726">
    <property type="entry name" value="Fe/S_biogenesis_protein_NfuA"/>
</dbReference>
<dbReference type="InterPro" id="IPR000361">
    <property type="entry name" value="FeS_biogenesis"/>
</dbReference>
<dbReference type="InterPro" id="IPR034904">
    <property type="entry name" value="FSCA_dom_sf"/>
</dbReference>
<dbReference type="InterPro" id="IPR035903">
    <property type="entry name" value="HesB-like_dom_sf"/>
</dbReference>
<dbReference type="InterPro" id="IPR001075">
    <property type="entry name" value="NIF_FeS_clus_asmbl_NifU_C"/>
</dbReference>
<dbReference type="NCBIfam" id="NF008392">
    <property type="entry name" value="PRK11190.1"/>
    <property type="match status" value="1"/>
</dbReference>
<dbReference type="NCBIfam" id="TIGR03341">
    <property type="entry name" value="YhgI_GntY"/>
    <property type="match status" value="1"/>
</dbReference>
<dbReference type="PANTHER" id="PTHR11178:SF51">
    <property type="entry name" value="FE_S BIOGENESIS PROTEIN NFUA"/>
    <property type="match status" value="1"/>
</dbReference>
<dbReference type="PANTHER" id="PTHR11178">
    <property type="entry name" value="IRON-SULFUR CLUSTER SCAFFOLD PROTEIN NFU-RELATED"/>
    <property type="match status" value="1"/>
</dbReference>
<dbReference type="Pfam" id="PF01521">
    <property type="entry name" value="Fe-S_biosyn"/>
    <property type="match status" value="1"/>
</dbReference>
<dbReference type="Pfam" id="PF01106">
    <property type="entry name" value="NifU"/>
    <property type="match status" value="1"/>
</dbReference>
<dbReference type="SUPFAM" id="SSF117916">
    <property type="entry name" value="Fe-S cluster assembly (FSCA) domain-like"/>
    <property type="match status" value="1"/>
</dbReference>
<dbReference type="SUPFAM" id="SSF89360">
    <property type="entry name" value="HesB-like domain"/>
    <property type="match status" value="1"/>
</dbReference>
<gene>
    <name evidence="1" type="primary">nfuA</name>
    <name type="ordered locus">YPK_0163</name>
</gene>
<sequence length="191" mass="21004">MITITDAAQSHFAKLLANQEEGTQIRVFVINPGTPTAECGVSYCPPDAVEATDTELKFEQLSAYVDELSVPYLQDAEIDFVTDQLGSQLTLKAPNAKMRKVDDSAPLMERVEYVLQSQINPQLAGHGGRVTLMEITPEGLAILQFGGGCNGCSMVDVTLKEGIEKELLQKFPELKGVRDLTEHQRGEHSYY</sequence>
<feature type="chain" id="PRO_1000186797" description="Fe/S biogenesis protein NfuA">
    <location>
        <begin position="1"/>
        <end position="191"/>
    </location>
</feature>
<feature type="binding site" evidence="1">
    <location>
        <position position="149"/>
    </location>
    <ligand>
        <name>[4Fe-4S] cluster</name>
        <dbReference type="ChEBI" id="CHEBI:49883"/>
    </ligand>
</feature>
<feature type="binding site" evidence="1">
    <location>
        <position position="152"/>
    </location>
    <ligand>
        <name>[4Fe-4S] cluster</name>
        <dbReference type="ChEBI" id="CHEBI:49883"/>
    </ligand>
</feature>
<evidence type="ECO:0000255" key="1">
    <source>
        <dbReference type="HAMAP-Rule" id="MF_01637"/>
    </source>
</evidence>